<protein>
    <recommendedName>
        <fullName>Suppressor of lethality of KEX2 GAS1 double null mutant protein 1</fullName>
    </recommendedName>
</protein>
<reference key="1">
    <citation type="submission" date="2005-03" db="EMBL/GenBank/DDBJ databases">
        <title>Annotation of the Saccharomyces cerevisiae RM11-1a genome.</title>
        <authorList>
            <consortium name="The Broad Institute Genome Sequencing Platform"/>
            <person name="Birren B.W."/>
            <person name="Lander E.S."/>
            <person name="Galagan J.E."/>
            <person name="Nusbaum C."/>
            <person name="Devon K."/>
            <person name="Cuomo C."/>
            <person name="Jaffe D.B."/>
            <person name="Butler J."/>
            <person name="Alvarez P."/>
            <person name="Gnerre S."/>
            <person name="Grabherr M."/>
            <person name="Kleber M."/>
            <person name="Mauceli E.W."/>
            <person name="Brockman W."/>
            <person name="MacCallum I.A."/>
            <person name="Rounsley S."/>
            <person name="Young S.K."/>
            <person name="LaButti K."/>
            <person name="Pushparaj V."/>
            <person name="DeCaprio D."/>
            <person name="Crawford M."/>
            <person name="Koehrsen M."/>
            <person name="Engels R."/>
            <person name="Montgomery P."/>
            <person name="Pearson M."/>
            <person name="Howarth C."/>
            <person name="Larson L."/>
            <person name="Luoma S."/>
            <person name="White J."/>
            <person name="O'Leary S."/>
            <person name="Kodira C.D."/>
            <person name="Zeng Q."/>
            <person name="Yandava C."/>
            <person name="Alvarado L."/>
            <person name="Pratt S."/>
            <person name="Kruglyak L."/>
        </authorList>
    </citation>
    <scope>NUCLEOTIDE SEQUENCE [LARGE SCALE GENOMIC DNA]</scope>
    <source>
        <strain>RM11-1a</strain>
    </source>
</reference>
<feature type="chain" id="PRO_0000399672" description="Suppressor of lethality of KEX2 GAS1 double null mutant protein 1">
    <location>
        <begin position="1"/>
        <end position="355"/>
    </location>
</feature>
<feature type="topological domain" description="Extracellular" evidence="3">
    <location>
        <begin position="1"/>
        <end position="8"/>
    </location>
</feature>
<feature type="transmembrane region" description="Helical; Signal-anchor for type III membrane protein" evidence="3">
    <location>
        <begin position="9"/>
        <end position="29"/>
    </location>
</feature>
<feature type="topological domain" description="Cytoplasmic" evidence="3">
    <location>
        <begin position="30"/>
        <end position="355"/>
    </location>
</feature>
<feature type="region of interest" description="Disordered" evidence="4">
    <location>
        <begin position="70"/>
        <end position="114"/>
    </location>
</feature>
<feature type="compositionally biased region" description="Basic and acidic residues" evidence="4">
    <location>
        <begin position="92"/>
        <end position="108"/>
    </location>
</feature>
<feature type="modified residue" description="Phosphoserine" evidence="2">
    <location>
        <position position="142"/>
    </location>
</feature>
<feature type="modified residue" description="Phosphothreonine" evidence="2">
    <location>
        <position position="273"/>
    </location>
</feature>
<evidence type="ECO:0000250" key="1"/>
<evidence type="ECO:0000250" key="2">
    <source>
        <dbReference type="UniProtKB" id="P36169"/>
    </source>
</evidence>
<evidence type="ECO:0000255" key="3"/>
<evidence type="ECO:0000256" key="4">
    <source>
        <dbReference type="SAM" id="MobiDB-lite"/>
    </source>
</evidence>
<evidence type="ECO:0000305" key="5"/>
<organism>
    <name type="scientific">Saccharomyces cerevisiae (strain RM11-1a)</name>
    <name type="common">Baker's yeast</name>
    <dbReference type="NCBI Taxonomy" id="285006"/>
    <lineage>
        <taxon>Eukaryota</taxon>
        <taxon>Fungi</taxon>
        <taxon>Dikarya</taxon>
        <taxon>Ascomycota</taxon>
        <taxon>Saccharomycotina</taxon>
        <taxon>Saccharomycetes</taxon>
        <taxon>Saccharomycetales</taxon>
        <taxon>Saccharomycetaceae</taxon>
        <taxon>Saccharomyces</taxon>
    </lineage>
</organism>
<accession>B3LRH5</accession>
<dbReference type="EMBL" id="CH408051">
    <property type="protein sequence ID" value="EDV13178.1"/>
    <property type="molecule type" value="Genomic_DNA"/>
</dbReference>
<dbReference type="HOGENOM" id="CLU_079389_0_0_1"/>
<dbReference type="OrthoDB" id="41861at4893"/>
<dbReference type="Proteomes" id="UP000008335">
    <property type="component" value="Unassembled WGS sequence"/>
</dbReference>
<dbReference type="GO" id="GO:0033101">
    <property type="term" value="C:cellular bud membrane"/>
    <property type="evidence" value="ECO:0007669"/>
    <property type="project" value="UniProtKB-SubCell"/>
</dbReference>
<dbReference type="GO" id="GO:0071555">
    <property type="term" value="P:cell wall organization"/>
    <property type="evidence" value="ECO:0007669"/>
    <property type="project" value="UniProtKB-KW"/>
</dbReference>
<sequence>MTASTSVAVGCAVGIPVGVGIIIAVCFWFNLQKRYKREEQDDRELERAIYDESGFVSFDNFGPLRDSKDEAALASSELKNPDHTSGSSEGSAHPEEKDGKSRDQEKPLGKKNSKYYVPAYRRKINLLQVRNNNYGNNARQKSVVDLPSINNSSNVSLSSSQRHITKRQISVYDQMVPVISDEGPKFFADPSSDTNTSNDQNKASMIELKHNTRQSSNENLIRKLQNQDFGSYYPRRASSSFLNGNISNASFHTRNSSITSVNKRDALEDVFATPKSAAQSQLPNTFDKDNEGIDADHSVKDSRSAITDKDKNIYKLQNNYDVGNIGEIAEEDQYENEFTNYSQSKREFIESLRPK</sequence>
<proteinExistence type="inferred from homology"/>
<gene>
    <name type="primary">SKG1</name>
    <name type="ORF">SCRG_04116</name>
</gene>
<comment type="function">
    <text evidence="1">Plays a role in cell wall integrity. Affects the cell wall polymer composition in the growing region of the cell (By similarity).</text>
</comment>
<comment type="subcellular location">
    <subcellularLocation>
        <location evidence="1">Cell membrane</location>
        <topology evidence="1">Single-pass type III membrane protein</topology>
        <orientation evidence="1">Cytoplasmic side</orientation>
    </subcellularLocation>
    <subcellularLocation>
        <location evidence="1">Bud membrane</location>
        <topology evidence="1">Single-pass type III membrane protein</topology>
        <orientation evidence="1">Cytoplasmic side</orientation>
    </subcellularLocation>
    <text evidence="1">Localizes on the inner surface of the plasma membrane at the bud and in the daughter cell. Localizes at an incipient bud site in the cells with emerging buds, a bud tip in small- or medium-budded cells, and a cell periphery in large-budded cells.</text>
</comment>
<comment type="similarity">
    <text evidence="5">Belongs to the SKG1 family.</text>
</comment>
<name>SKG1_YEAS1</name>
<keyword id="KW-1003">Cell membrane</keyword>
<keyword id="KW-0961">Cell wall biogenesis/degradation</keyword>
<keyword id="KW-0472">Membrane</keyword>
<keyword id="KW-0597">Phosphoprotein</keyword>
<keyword id="KW-0735">Signal-anchor</keyword>
<keyword id="KW-0812">Transmembrane</keyword>
<keyword id="KW-1133">Transmembrane helix</keyword>